<gene>
    <name evidence="1" type="primary">truA</name>
    <name type="ordered locus">MGAS10750_Spy1672</name>
</gene>
<accession>Q1J4W4</accession>
<evidence type="ECO:0000255" key="1">
    <source>
        <dbReference type="HAMAP-Rule" id="MF_00171"/>
    </source>
</evidence>
<comment type="function">
    <text evidence="1">Formation of pseudouridine at positions 38, 39 and 40 in the anticodon stem and loop of transfer RNAs.</text>
</comment>
<comment type="catalytic activity">
    <reaction evidence="1">
        <text>uridine(38/39/40) in tRNA = pseudouridine(38/39/40) in tRNA</text>
        <dbReference type="Rhea" id="RHEA:22376"/>
        <dbReference type="Rhea" id="RHEA-COMP:10085"/>
        <dbReference type="Rhea" id="RHEA-COMP:10087"/>
        <dbReference type="ChEBI" id="CHEBI:65314"/>
        <dbReference type="ChEBI" id="CHEBI:65315"/>
        <dbReference type="EC" id="5.4.99.12"/>
    </reaction>
</comment>
<comment type="subunit">
    <text evidence="1">Homodimer.</text>
</comment>
<comment type="similarity">
    <text evidence="1">Belongs to the tRNA pseudouridine synthase TruA family.</text>
</comment>
<keyword id="KW-0413">Isomerase</keyword>
<keyword id="KW-0819">tRNA processing</keyword>
<reference key="1">
    <citation type="journal article" date="2006" name="Proc. Natl. Acad. Sci. U.S.A.">
        <title>Molecular genetic anatomy of inter- and intraserotype variation in the human bacterial pathogen group A Streptococcus.</title>
        <authorList>
            <person name="Beres S.B."/>
            <person name="Richter E.W."/>
            <person name="Nagiec M.J."/>
            <person name="Sumby P."/>
            <person name="Porcella S.F."/>
            <person name="DeLeo F.R."/>
            <person name="Musser J.M."/>
        </authorList>
    </citation>
    <scope>NUCLEOTIDE SEQUENCE [LARGE SCALE GENOMIC DNA]</scope>
    <source>
        <strain>MGAS10750</strain>
    </source>
</reference>
<feature type="chain" id="PRO_1000017195" description="tRNA pseudouridine synthase A">
    <location>
        <begin position="1"/>
        <end position="249"/>
    </location>
</feature>
<feature type="active site" description="Nucleophile" evidence="1">
    <location>
        <position position="53"/>
    </location>
</feature>
<feature type="binding site" evidence="1">
    <location>
        <position position="111"/>
    </location>
    <ligand>
        <name>substrate</name>
    </ligand>
</feature>
<proteinExistence type="inferred from homology"/>
<dbReference type="EC" id="5.4.99.12" evidence="1"/>
<dbReference type="EMBL" id="CP000262">
    <property type="protein sequence ID" value="ABF38622.1"/>
    <property type="molecule type" value="Genomic_DNA"/>
</dbReference>
<dbReference type="SMR" id="Q1J4W4"/>
<dbReference type="KEGG" id="spi:MGAS10750_Spy1672"/>
<dbReference type="HOGENOM" id="CLU_014673_0_1_9"/>
<dbReference type="Proteomes" id="UP000002434">
    <property type="component" value="Chromosome"/>
</dbReference>
<dbReference type="GO" id="GO:0003723">
    <property type="term" value="F:RNA binding"/>
    <property type="evidence" value="ECO:0007669"/>
    <property type="project" value="InterPro"/>
</dbReference>
<dbReference type="GO" id="GO:0160147">
    <property type="term" value="F:tRNA pseudouridine(38-40) synthase activity"/>
    <property type="evidence" value="ECO:0007669"/>
    <property type="project" value="UniProtKB-EC"/>
</dbReference>
<dbReference type="GO" id="GO:0031119">
    <property type="term" value="P:tRNA pseudouridine synthesis"/>
    <property type="evidence" value="ECO:0007669"/>
    <property type="project" value="UniProtKB-UniRule"/>
</dbReference>
<dbReference type="CDD" id="cd02570">
    <property type="entry name" value="PseudoU_synth_EcTruA"/>
    <property type="match status" value="1"/>
</dbReference>
<dbReference type="FunFam" id="3.30.70.580:FF:000001">
    <property type="entry name" value="tRNA pseudouridine synthase A"/>
    <property type="match status" value="1"/>
</dbReference>
<dbReference type="Gene3D" id="3.30.70.660">
    <property type="entry name" value="Pseudouridine synthase I, catalytic domain, C-terminal subdomain"/>
    <property type="match status" value="1"/>
</dbReference>
<dbReference type="Gene3D" id="3.30.70.580">
    <property type="entry name" value="Pseudouridine synthase I, catalytic domain, N-terminal subdomain"/>
    <property type="match status" value="1"/>
</dbReference>
<dbReference type="HAMAP" id="MF_00171">
    <property type="entry name" value="TruA"/>
    <property type="match status" value="1"/>
</dbReference>
<dbReference type="InterPro" id="IPR020103">
    <property type="entry name" value="PsdUridine_synth_cat_dom_sf"/>
</dbReference>
<dbReference type="InterPro" id="IPR001406">
    <property type="entry name" value="PsdUridine_synth_TruA"/>
</dbReference>
<dbReference type="InterPro" id="IPR020097">
    <property type="entry name" value="PsdUridine_synth_TruA_a/b_dom"/>
</dbReference>
<dbReference type="InterPro" id="IPR020095">
    <property type="entry name" value="PsdUridine_synth_TruA_C"/>
</dbReference>
<dbReference type="InterPro" id="IPR020094">
    <property type="entry name" value="TruA/RsuA/RluB/E/F_N"/>
</dbReference>
<dbReference type="NCBIfam" id="TIGR00071">
    <property type="entry name" value="hisT_truA"/>
    <property type="match status" value="1"/>
</dbReference>
<dbReference type="PANTHER" id="PTHR11142">
    <property type="entry name" value="PSEUDOURIDYLATE SYNTHASE"/>
    <property type="match status" value="1"/>
</dbReference>
<dbReference type="PANTHER" id="PTHR11142:SF0">
    <property type="entry name" value="TRNA PSEUDOURIDINE SYNTHASE-LIKE 1"/>
    <property type="match status" value="1"/>
</dbReference>
<dbReference type="Pfam" id="PF01416">
    <property type="entry name" value="PseudoU_synth_1"/>
    <property type="match status" value="2"/>
</dbReference>
<dbReference type="PIRSF" id="PIRSF001430">
    <property type="entry name" value="tRNA_psdUrid_synth"/>
    <property type="match status" value="1"/>
</dbReference>
<dbReference type="SUPFAM" id="SSF55120">
    <property type="entry name" value="Pseudouridine synthase"/>
    <property type="match status" value="1"/>
</dbReference>
<name>TRUA_STRPF</name>
<sequence length="249" mass="28356">MVRYKATISYDGTLFSGFQRQRHLRTVQEEIEKTLYKLNNGTKIIIHGAGRTDAGVHAYGQVIHFDLPQEQEVEKLRFALDTQTPEDIDVVNIEKVADDFHCRYQKHLKTYEFLVDNGRPKNPMMRHYTTHYPYTLNIKLMQEAINGLVGTHDFTGFTAAGTSVQNKVRTITKATVSRDEKTDFLVFTFSGNGFLYKQVRNMVGTLLKIGNGQMPVEQVKVILSSKNRQLAGPTISGNGLYLKEICYEN</sequence>
<organism>
    <name type="scientific">Streptococcus pyogenes serotype M4 (strain MGAS10750)</name>
    <dbReference type="NCBI Taxonomy" id="370554"/>
    <lineage>
        <taxon>Bacteria</taxon>
        <taxon>Bacillati</taxon>
        <taxon>Bacillota</taxon>
        <taxon>Bacilli</taxon>
        <taxon>Lactobacillales</taxon>
        <taxon>Streptococcaceae</taxon>
        <taxon>Streptococcus</taxon>
    </lineage>
</organism>
<protein>
    <recommendedName>
        <fullName evidence="1">tRNA pseudouridine synthase A</fullName>
        <ecNumber evidence="1">5.4.99.12</ecNumber>
    </recommendedName>
    <alternativeName>
        <fullName evidence="1">tRNA pseudouridine(38-40) synthase</fullName>
    </alternativeName>
    <alternativeName>
        <fullName evidence="1">tRNA pseudouridylate synthase I</fullName>
    </alternativeName>
    <alternativeName>
        <fullName evidence="1">tRNA-uridine isomerase I</fullName>
    </alternativeName>
</protein>